<sequence>EAAGLLAFPRV</sequence>
<feature type="peptide" id="PRO_0000421640" description="CAPA-Periviscerokinin-1" evidence="3">
    <location>
        <begin position="1"/>
        <end position="11"/>
    </location>
</feature>
<feature type="modified residue" description="Valine amide" evidence="3">
    <location>
        <position position="11"/>
    </location>
</feature>
<accession>B3A0F5</accession>
<reference evidence="5" key="1">
    <citation type="journal article" date="2012" name="Syst. Biol.">
        <title>Peptidomics-based phylogeny and biogeography of Mantophasmatodea (Hexapoda).</title>
        <authorList>
            <person name="Predel R."/>
            <person name="Neupert S."/>
            <person name="Huetteroth W."/>
            <person name="Kahnt J."/>
            <person name="Waidelich D."/>
            <person name="Roth S."/>
        </authorList>
    </citation>
    <scope>PROTEIN SEQUENCE</scope>
    <scope>AMIDATION AT VAL-11</scope>
    <source>
        <tissue evidence="3">Abdominal perisympathetic organs</tissue>
    </source>
</reference>
<proteinExistence type="evidence at protein level"/>
<organism>
    <name type="scientific">Praedatophasma maraisi</name>
    <name type="common">Gladiator</name>
    <name type="synonym">Heel-walker</name>
    <dbReference type="NCBI Taxonomy" id="409170"/>
    <lineage>
        <taxon>Eukaryota</taxon>
        <taxon>Metazoa</taxon>
        <taxon>Ecdysozoa</taxon>
        <taxon>Arthropoda</taxon>
        <taxon>Hexapoda</taxon>
        <taxon>Insecta</taxon>
        <taxon>Pterygota</taxon>
        <taxon>Neoptera</taxon>
        <taxon>Polyneoptera</taxon>
        <taxon>Mantophasmatodea</taxon>
        <taxon>Mantophasmatidae</taxon>
        <taxon>Praedatophasma</taxon>
    </lineage>
</organism>
<dbReference type="GO" id="GO:0005576">
    <property type="term" value="C:extracellular region"/>
    <property type="evidence" value="ECO:0007669"/>
    <property type="project" value="UniProtKB-SubCell"/>
</dbReference>
<dbReference type="GO" id="GO:0007218">
    <property type="term" value="P:neuropeptide signaling pathway"/>
    <property type="evidence" value="ECO:0007669"/>
    <property type="project" value="UniProtKB-KW"/>
</dbReference>
<dbReference type="InterPro" id="IPR013231">
    <property type="entry name" value="Periviscerokinin"/>
</dbReference>
<dbReference type="Pfam" id="PF08259">
    <property type="entry name" value="Periviscerokin"/>
    <property type="match status" value="1"/>
</dbReference>
<name>PVK1_PRAMA</name>
<comment type="function">
    <text evidence="1">Mediates visceral muscle contractile activity (myotropic activity).</text>
</comment>
<comment type="subcellular location">
    <subcellularLocation>
        <location evidence="6">Secreted</location>
    </subcellularLocation>
</comment>
<comment type="similarity">
    <text evidence="2">Belongs to the periviscerokinin family.</text>
</comment>
<protein>
    <recommendedName>
        <fullName evidence="4">CAPA-Periviscerokinin-1</fullName>
        <shortName evidence="4">CAPA-PVK-1</shortName>
    </recommendedName>
</protein>
<evidence type="ECO:0000250" key="1">
    <source>
        <dbReference type="UniProtKB" id="P83923"/>
    </source>
</evidence>
<evidence type="ECO:0000255" key="2"/>
<evidence type="ECO:0000269" key="3">
    <source>
    </source>
</evidence>
<evidence type="ECO:0000303" key="4">
    <source>
    </source>
</evidence>
<evidence type="ECO:0000305" key="5"/>
<evidence type="ECO:0000305" key="6">
    <source>
    </source>
</evidence>
<keyword id="KW-0027">Amidation</keyword>
<keyword id="KW-0903">Direct protein sequencing</keyword>
<keyword id="KW-0527">Neuropeptide</keyword>
<keyword id="KW-0964">Secreted</keyword>